<keyword id="KW-0249">Electron transport</keyword>
<keyword id="KW-0349">Heme</keyword>
<keyword id="KW-0408">Iron</keyword>
<keyword id="KW-0472">Membrane</keyword>
<keyword id="KW-0479">Metal-binding</keyword>
<keyword id="KW-0602">Photosynthesis</keyword>
<keyword id="KW-0604">Photosystem II</keyword>
<keyword id="KW-0732">Signal</keyword>
<keyword id="KW-0793">Thylakoid</keyword>
<keyword id="KW-0813">Transport</keyword>
<reference key="1">
    <citation type="journal article" date="2007" name="Photosyn. Res.">
        <title>Complete nucleotide sequence of the freshwater unicellular cyanobacterium Synechococcus elongatus PCC 6301 chromosome: gene content and organization.</title>
        <authorList>
            <person name="Sugita C."/>
            <person name="Ogata K."/>
            <person name="Shikata M."/>
            <person name="Jikuya H."/>
            <person name="Takano J."/>
            <person name="Furumichi M."/>
            <person name="Kanehisa M."/>
            <person name="Omata T."/>
            <person name="Sugiura M."/>
            <person name="Sugita M."/>
        </authorList>
    </citation>
    <scope>NUCLEOTIDE SEQUENCE [LARGE SCALE GENOMIC DNA]</scope>
    <source>
        <strain>ATCC 27144 / PCC 6301 / SAUG 1402/1</strain>
    </source>
</reference>
<gene>
    <name evidence="1" type="primary">psbV</name>
    <name type="ordered locus">syc2085_d</name>
</gene>
<accession>Q5N095</accession>
<proteinExistence type="inferred from homology"/>
<sequence length="167" mass="18239">MVFKTLRRTLWLTLAALLAVFQFNLGAAQAAELTAETRTVKLNPQGDNVTLSLKQVAEGKQLFAYACGQCHVGGITKTDPNVGLDPEALALATPPRDSVESLVDYLHNPTTYDGEREISELHPSTKSTDIFPKMRNLTEDDLVAISGHILLQPKIVGTKWGGGKIYY</sequence>
<protein>
    <recommendedName>
        <fullName evidence="1">Photosystem II extrinsic protein V</fullName>
        <shortName evidence="1">PsbV</shortName>
    </recommendedName>
    <alternativeName>
        <fullName evidence="1">Cytochrome c-550</fullName>
    </alternativeName>
    <alternativeName>
        <fullName evidence="1">Cytochrome c550</fullName>
    </alternativeName>
    <alternativeName>
        <fullName evidence="1">Low-potential cytochrome c</fullName>
    </alternativeName>
</protein>
<comment type="function">
    <text evidence="1">One of the extrinsic, lumenal subunits of photosystem II (PSII). PSII is a light-driven water plastoquinone oxidoreductase, using light energy to abstract electrons from H(2)O, generating a proton gradient subsequently used for ATP formation. The extrinsic proteins stabilize the structure of photosystem II oxygen-evolving complex (OEC), the ion environment of oxygen evolution and protect the OEC against heat-induced inactivation. Low-potential cytochrome c that plays a role in the OEC of PSII.</text>
</comment>
<comment type="cofactor">
    <cofactor evidence="1">
        <name>heme c</name>
        <dbReference type="ChEBI" id="CHEBI:61717"/>
    </cofactor>
    <text evidence="1">Binds 1 heme c group covalently per subunit.</text>
</comment>
<comment type="subunit">
    <text evidence="1">PSII is composed of 1 copy each of membrane proteins PsbA, PsbB, PsbC, PsbD, PsbE, PsbF, PsbH, PsbI, PsbJ, PsbK, PsbL, PsbM, PsbT, PsbX, PsbY, PsbZ, Psb30/Ycf12, peripheral proteins PsbO, CyanoQ (PsbQ), PsbU, PsbV and a large number of cofactors. It forms dimeric complexes.</text>
</comment>
<comment type="subcellular location">
    <subcellularLocation>
        <location evidence="1">Cellular thylakoid membrane</location>
        <topology evidence="1">Peripheral membrane protein</topology>
        <orientation evidence="1">Lumenal side</orientation>
    </subcellularLocation>
    <text evidence="1">Associated with photosystem II at the lumenal side of the thylakoid membrane.</text>
</comment>
<comment type="similarity">
    <text evidence="1">Belongs to the cytochrome c family. PsbV subfamily.</text>
</comment>
<comment type="sequence caution" evidence="2">
    <conflict type="erroneous initiation">
        <sequence resource="EMBL-CDS" id="BAD80275"/>
    </conflict>
    <text>Extended N-terminus.</text>
</comment>
<feature type="signal peptide" evidence="1">
    <location>
        <begin position="1"/>
        <end position="30"/>
    </location>
</feature>
<feature type="chain" id="PRO_0000295601" description="Photosystem II extrinsic protein V">
    <location>
        <begin position="31"/>
        <end position="167"/>
    </location>
</feature>
<feature type="binding site" description="covalent" evidence="1">
    <location>
        <position position="67"/>
    </location>
    <ligand>
        <name>heme c</name>
        <dbReference type="ChEBI" id="CHEBI:61717"/>
    </ligand>
</feature>
<feature type="binding site" description="covalent" evidence="1">
    <location>
        <position position="70"/>
    </location>
    <ligand>
        <name>heme c</name>
        <dbReference type="ChEBI" id="CHEBI:61717"/>
    </ligand>
</feature>
<feature type="binding site" description="axial binding residue" evidence="1">
    <location>
        <position position="71"/>
    </location>
    <ligand>
        <name>heme c</name>
        <dbReference type="ChEBI" id="CHEBI:61717"/>
    </ligand>
    <ligandPart>
        <name>Fe</name>
        <dbReference type="ChEBI" id="CHEBI:18248"/>
    </ligandPart>
</feature>
<feature type="binding site" description="axial binding residue" evidence="1">
    <location>
        <position position="122"/>
    </location>
    <ligand>
        <name>heme c</name>
        <dbReference type="ChEBI" id="CHEBI:61717"/>
    </ligand>
    <ligandPart>
        <name>Fe</name>
        <dbReference type="ChEBI" id="CHEBI:18248"/>
    </ligandPart>
</feature>
<evidence type="ECO:0000255" key="1">
    <source>
        <dbReference type="HAMAP-Rule" id="MF_01378"/>
    </source>
</evidence>
<evidence type="ECO:0000305" key="2"/>
<dbReference type="EMBL" id="AP008231">
    <property type="protein sequence ID" value="BAD80275.1"/>
    <property type="status" value="ALT_INIT"/>
    <property type="molecule type" value="Genomic_DNA"/>
</dbReference>
<dbReference type="RefSeq" id="WP_039755617.1">
    <property type="nucleotide sequence ID" value="NZ_CP085785.1"/>
</dbReference>
<dbReference type="SMR" id="Q5N095"/>
<dbReference type="GeneID" id="72430884"/>
<dbReference type="KEGG" id="syc:syc2085_d"/>
<dbReference type="eggNOG" id="COG2010">
    <property type="taxonomic scope" value="Bacteria"/>
</dbReference>
<dbReference type="Proteomes" id="UP000001175">
    <property type="component" value="Chromosome"/>
</dbReference>
<dbReference type="GO" id="GO:0009523">
    <property type="term" value="C:photosystem II"/>
    <property type="evidence" value="ECO:0007669"/>
    <property type="project" value="UniProtKB-KW"/>
</dbReference>
<dbReference type="GO" id="GO:0031676">
    <property type="term" value="C:plasma membrane-derived thylakoid membrane"/>
    <property type="evidence" value="ECO:0007669"/>
    <property type="project" value="UniProtKB-SubCell"/>
</dbReference>
<dbReference type="GO" id="GO:0009055">
    <property type="term" value="F:electron transfer activity"/>
    <property type="evidence" value="ECO:0007669"/>
    <property type="project" value="InterPro"/>
</dbReference>
<dbReference type="GO" id="GO:0020037">
    <property type="term" value="F:heme binding"/>
    <property type="evidence" value="ECO:0007669"/>
    <property type="project" value="InterPro"/>
</dbReference>
<dbReference type="GO" id="GO:0005506">
    <property type="term" value="F:iron ion binding"/>
    <property type="evidence" value="ECO:0007669"/>
    <property type="project" value="InterPro"/>
</dbReference>
<dbReference type="GO" id="GO:0019684">
    <property type="term" value="P:photosynthesis, light reaction"/>
    <property type="evidence" value="ECO:0007669"/>
    <property type="project" value="UniProtKB-UniRule"/>
</dbReference>
<dbReference type="GO" id="GO:0022904">
    <property type="term" value="P:respiratory electron transport chain"/>
    <property type="evidence" value="ECO:0007669"/>
    <property type="project" value="InterPro"/>
</dbReference>
<dbReference type="Gene3D" id="1.10.760.10">
    <property type="entry name" value="Cytochrome c-like domain"/>
    <property type="match status" value="1"/>
</dbReference>
<dbReference type="HAMAP" id="MF_01378">
    <property type="entry name" value="PSII_Cyt550"/>
    <property type="match status" value="1"/>
</dbReference>
<dbReference type="InterPro" id="IPR009056">
    <property type="entry name" value="Cyt_c-like_dom"/>
</dbReference>
<dbReference type="InterPro" id="IPR036909">
    <property type="entry name" value="Cyt_c-like_dom_sf"/>
</dbReference>
<dbReference type="InterPro" id="IPR029490">
    <property type="entry name" value="Cytochrom_C550"/>
</dbReference>
<dbReference type="InterPro" id="IPR017851">
    <property type="entry name" value="PsbV_cyt_c550"/>
</dbReference>
<dbReference type="InterPro" id="IPR016003">
    <property type="entry name" value="PsbV_cyt_c550-like"/>
</dbReference>
<dbReference type="NCBIfam" id="TIGR03045">
    <property type="entry name" value="PS_II_C550"/>
    <property type="match status" value="1"/>
</dbReference>
<dbReference type="Pfam" id="PF14495">
    <property type="entry name" value="Cytochrom_C550"/>
    <property type="match status" value="1"/>
</dbReference>
<dbReference type="PIRSF" id="PIRSF005890">
    <property type="entry name" value="Phot_II_cyt_c550"/>
    <property type="match status" value="1"/>
</dbReference>
<dbReference type="SUPFAM" id="SSF46626">
    <property type="entry name" value="Cytochrome c"/>
    <property type="match status" value="1"/>
</dbReference>
<dbReference type="PROSITE" id="PS51007">
    <property type="entry name" value="CYTC"/>
    <property type="match status" value="1"/>
</dbReference>
<name>CY550_SYNP6</name>
<organism>
    <name type="scientific">Synechococcus sp. (strain ATCC 27144 / PCC 6301 / SAUG 1402/1)</name>
    <name type="common">Anacystis nidulans</name>
    <dbReference type="NCBI Taxonomy" id="269084"/>
    <lineage>
        <taxon>Bacteria</taxon>
        <taxon>Bacillati</taxon>
        <taxon>Cyanobacteriota</taxon>
        <taxon>Cyanophyceae</taxon>
        <taxon>Synechococcales</taxon>
        <taxon>Synechococcaceae</taxon>
        <taxon>Synechococcus</taxon>
    </lineage>
</organism>